<gene>
    <name type="primary">rpsF</name>
    <name type="ordered locus">VC_0366</name>
</gene>
<keyword id="KW-1185">Reference proteome</keyword>
<keyword id="KW-0687">Ribonucleoprotein</keyword>
<keyword id="KW-0689">Ribosomal protein</keyword>
<keyword id="KW-0694">RNA-binding</keyword>
<keyword id="KW-0699">rRNA-binding</keyword>
<reference key="1">
    <citation type="journal article" date="2000" name="Nature">
        <title>DNA sequence of both chromosomes of the cholera pathogen Vibrio cholerae.</title>
        <authorList>
            <person name="Heidelberg J.F."/>
            <person name="Eisen J.A."/>
            <person name="Nelson W.C."/>
            <person name="Clayton R.A."/>
            <person name="Gwinn M.L."/>
            <person name="Dodson R.J."/>
            <person name="Haft D.H."/>
            <person name="Hickey E.K."/>
            <person name="Peterson J.D."/>
            <person name="Umayam L.A."/>
            <person name="Gill S.R."/>
            <person name="Nelson K.E."/>
            <person name="Read T.D."/>
            <person name="Tettelin H."/>
            <person name="Richardson D.L."/>
            <person name="Ermolaeva M.D."/>
            <person name="Vamathevan J.J."/>
            <person name="Bass S."/>
            <person name="Qin H."/>
            <person name="Dragoi I."/>
            <person name="Sellers P."/>
            <person name="McDonald L.A."/>
            <person name="Utterback T.R."/>
            <person name="Fleischmann R.D."/>
            <person name="Nierman W.C."/>
            <person name="White O."/>
            <person name="Salzberg S.L."/>
            <person name="Smith H.O."/>
            <person name="Colwell R.R."/>
            <person name="Mekalanos J.J."/>
            <person name="Venter J.C."/>
            <person name="Fraser C.M."/>
        </authorList>
    </citation>
    <scope>NUCLEOTIDE SEQUENCE [LARGE SCALE GENOMIC DNA]</scope>
    <source>
        <strain>ATCC 39315 / El Tor Inaba N16961</strain>
    </source>
</reference>
<accession>Q9KUZ2</accession>
<protein>
    <recommendedName>
        <fullName evidence="2">Small ribosomal subunit protein bS6</fullName>
    </recommendedName>
    <alternativeName>
        <fullName>30S ribosomal protein S6</fullName>
    </alternativeName>
</protein>
<dbReference type="EMBL" id="AE003852">
    <property type="protein sequence ID" value="AAF93539.1"/>
    <property type="molecule type" value="Genomic_DNA"/>
</dbReference>
<dbReference type="PIR" id="H82332">
    <property type="entry name" value="H82332"/>
</dbReference>
<dbReference type="RefSeq" id="NP_230020.1">
    <property type="nucleotide sequence ID" value="NC_002505.1"/>
</dbReference>
<dbReference type="RefSeq" id="WP_001216668.1">
    <property type="nucleotide sequence ID" value="NZ_LT906614.1"/>
</dbReference>
<dbReference type="SMR" id="Q9KUZ2"/>
<dbReference type="STRING" id="243277.VC_0366"/>
<dbReference type="DNASU" id="2615045"/>
<dbReference type="EnsemblBacteria" id="AAF93539">
    <property type="protein sequence ID" value="AAF93539"/>
    <property type="gene ID" value="VC_0366"/>
</dbReference>
<dbReference type="GeneID" id="88783679"/>
<dbReference type="KEGG" id="vch:VC_0366"/>
<dbReference type="PATRIC" id="fig|243277.26.peg.342"/>
<dbReference type="eggNOG" id="COG0360">
    <property type="taxonomic scope" value="Bacteria"/>
</dbReference>
<dbReference type="HOGENOM" id="CLU_113441_6_1_6"/>
<dbReference type="Proteomes" id="UP000000584">
    <property type="component" value="Chromosome 1"/>
</dbReference>
<dbReference type="GO" id="GO:0022627">
    <property type="term" value="C:cytosolic small ribosomal subunit"/>
    <property type="evidence" value="ECO:0000318"/>
    <property type="project" value="GO_Central"/>
</dbReference>
<dbReference type="GO" id="GO:0070181">
    <property type="term" value="F:small ribosomal subunit rRNA binding"/>
    <property type="evidence" value="ECO:0000318"/>
    <property type="project" value="GO_Central"/>
</dbReference>
<dbReference type="GO" id="GO:0003735">
    <property type="term" value="F:structural constituent of ribosome"/>
    <property type="evidence" value="ECO:0000318"/>
    <property type="project" value="GO_Central"/>
</dbReference>
<dbReference type="GO" id="GO:0006412">
    <property type="term" value="P:translation"/>
    <property type="evidence" value="ECO:0007669"/>
    <property type="project" value="UniProtKB-UniRule"/>
</dbReference>
<dbReference type="CDD" id="cd00473">
    <property type="entry name" value="bS6"/>
    <property type="match status" value="1"/>
</dbReference>
<dbReference type="FunFam" id="3.30.70.60:FF:000003">
    <property type="entry name" value="30S ribosomal protein S6"/>
    <property type="match status" value="1"/>
</dbReference>
<dbReference type="Gene3D" id="3.30.70.60">
    <property type="match status" value="1"/>
</dbReference>
<dbReference type="HAMAP" id="MF_00360">
    <property type="entry name" value="Ribosomal_bS6"/>
    <property type="match status" value="1"/>
</dbReference>
<dbReference type="InterPro" id="IPR000529">
    <property type="entry name" value="Ribosomal_bS6"/>
</dbReference>
<dbReference type="InterPro" id="IPR020815">
    <property type="entry name" value="Ribosomal_bS6_CS"/>
</dbReference>
<dbReference type="InterPro" id="IPR035980">
    <property type="entry name" value="Ribosomal_bS6_sf"/>
</dbReference>
<dbReference type="InterPro" id="IPR020814">
    <property type="entry name" value="Ribosomal_S6_plastid/chlpt"/>
</dbReference>
<dbReference type="InterPro" id="IPR014717">
    <property type="entry name" value="Transl_elong_EF1B/ribsomal_bS6"/>
</dbReference>
<dbReference type="NCBIfam" id="TIGR00166">
    <property type="entry name" value="S6"/>
    <property type="match status" value="1"/>
</dbReference>
<dbReference type="PANTHER" id="PTHR21011">
    <property type="entry name" value="MITOCHONDRIAL 28S RIBOSOMAL PROTEIN S6"/>
    <property type="match status" value="1"/>
</dbReference>
<dbReference type="PANTHER" id="PTHR21011:SF1">
    <property type="entry name" value="SMALL RIBOSOMAL SUBUNIT PROTEIN BS6M"/>
    <property type="match status" value="1"/>
</dbReference>
<dbReference type="Pfam" id="PF01250">
    <property type="entry name" value="Ribosomal_S6"/>
    <property type="match status" value="1"/>
</dbReference>
<dbReference type="SUPFAM" id="SSF54995">
    <property type="entry name" value="Ribosomal protein S6"/>
    <property type="match status" value="1"/>
</dbReference>
<dbReference type="PROSITE" id="PS01048">
    <property type="entry name" value="RIBOSOMAL_S6"/>
    <property type="match status" value="1"/>
</dbReference>
<evidence type="ECO:0000250" key="1"/>
<evidence type="ECO:0000305" key="2"/>
<name>RS6_VIBCH</name>
<organism>
    <name type="scientific">Vibrio cholerae serotype O1 (strain ATCC 39315 / El Tor Inaba N16961)</name>
    <dbReference type="NCBI Taxonomy" id="243277"/>
    <lineage>
        <taxon>Bacteria</taxon>
        <taxon>Pseudomonadati</taxon>
        <taxon>Pseudomonadota</taxon>
        <taxon>Gammaproteobacteria</taxon>
        <taxon>Vibrionales</taxon>
        <taxon>Vibrionaceae</taxon>
        <taxon>Vibrio</taxon>
    </lineage>
</organism>
<sequence length="122" mass="14249">MRHYEIVFMVHPDQSEQVAGMIERYTGSITEAGGKIHRLEDWGRRQLAYPINKLHKAHYVLMNVEADQAVVDELETAFRFNDAVLRNMIMRTKAAITEPSIMLKAREERVKRDEMKFDADVE</sequence>
<comment type="function">
    <text evidence="1">Binds together with bS18 to 16S ribosomal RNA.</text>
</comment>
<comment type="similarity">
    <text evidence="2">Belongs to the bacterial ribosomal protein bS6 family.</text>
</comment>
<feature type="chain" id="PRO_0000176871" description="Small ribosomal subunit protein bS6">
    <location>
        <begin position="1"/>
        <end position="122"/>
    </location>
</feature>
<proteinExistence type="inferred from homology"/>